<gene>
    <name evidence="14" type="primary">pep</name>
    <name type="ORF">NCU02549</name>
</gene>
<proteinExistence type="evidence at protein level"/>
<organism>
    <name type="scientific">Neurospora crassa (strain ATCC 24698 / 74-OR23-1A / CBS 708.71 / DSM 1257 / FGSC 987)</name>
    <dbReference type="NCBI Taxonomy" id="367110"/>
    <lineage>
        <taxon>Eukaryota</taxon>
        <taxon>Fungi</taxon>
        <taxon>Dikarya</taxon>
        <taxon>Ascomycota</taxon>
        <taxon>Pezizomycotina</taxon>
        <taxon>Sordariomycetes</taxon>
        <taxon>Sordariomycetidae</taxon>
        <taxon>Sordariales</taxon>
        <taxon>Sordariaceae</taxon>
        <taxon>Neurospora</taxon>
    </lineage>
</organism>
<feature type="transit peptide" description="Mitochondrion" evidence="9">
    <location>
        <begin position="1"/>
        <end position="28"/>
    </location>
</feature>
<feature type="chain" id="PRO_0000026782" description="Mitochondrial-processing peptidase subunit beta">
    <location>
        <begin position="29"/>
        <end position="476"/>
    </location>
</feature>
<feature type="active site" description="Proton acceptor" evidence="3">
    <location>
        <position position="87"/>
    </location>
</feature>
<feature type="binding site" evidence="3">
    <location>
        <position position="84"/>
    </location>
    <ligand>
        <name>Zn(2+)</name>
        <dbReference type="ChEBI" id="CHEBI:29105"/>
    </ligand>
</feature>
<feature type="binding site" evidence="3">
    <location>
        <position position="88"/>
    </location>
    <ligand>
        <name>Zn(2+)</name>
        <dbReference type="ChEBI" id="CHEBI:29105"/>
    </ligand>
</feature>
<feature type="binding site" evidence="3">
    <location>
        <position position="164"/>
    </location>
    <ligand>
        <name>Zn(2+)</name>
        <dbReference type="ChEBI" id="CHEBI:29105"/>
    </ligand>
</feature>
<evidence type="ECO:0000250" key="1">
    <source>
        <dbReference type="UniProtKB" id="P07256"/>
    </source>
</evidence>
<evidence type="ECO:0000250" key="2">
    <source>
        <dbReference type="UniProtKB" id="P10507"/>
    </source>
</evidence>
<evidence type="ECO:0000255" key="3">
    <source>
        <dbReference type="PROSITE-ProRule" id="PRU10096"/>
    </source>
</evidence>
<evidence type="ECO:0000269" key="4">
    <source>
    </source>
</evidence>
<evidence type="ECO:0000269" key="5">
    <source>
    </source>
</evidence>
<evidence type="ECO:0000269" key="6">
    <source>
    </source>
</evidence>
<evidence type="ECO:0000269" key="7">
    <source>
    </source>
</evidence>
<evidence type="ECO:0000269" key="8">
    <source>
    </source>
</evidence>
<evidence type="ECO:0000269" key="9">
    <source>
    </source>
</evidence>
<evidence type="ECO:0000269" key="10">
    <source>
    </source>
</evidence>
<evidence type="ECO:0000269" key="11">
    <source>
    </source>
</evidence>
<evidence type="ECO:0000269" key="12">
    <source>
    </source>
</evidence>
<evidence type="ECO:0000269" key="13">
    <source>
    </source>
</evidence>
<evidence type="ECO:0000303" key="14">
    <source>
    </source>
</evidence>
<evidence type="ECO:0000303" key="15">
    <source>
    </source>
</evidence>
<evidence type="ECO:0000303" key="16">
    <source>
    </source>
</evidence>
<evidence type="ECO:0000305" key="17"/>
<evidence type="ECO:0000305" key="18">
    <source>
    </source>
</evidence>
<protein>
    <recommendedName>
        <fullName evidence="16">Mitochondrial-processing peptidase subunit beta</fullName>
        <ecNumber evidence="9 13">3.4.24.64</ecNumber>
    </recommendedName>
    <alternativeName>
        <fullName>Beta-MPP</fullName>
    </alternativeName>
    <alternativeName>
        <fullName evidence="15">Complex III subunit I</fullName>
    </alternativeName>
    <alternativeName>
        <fullName>Core protein I</fullName>
    </alternativeName>
    <alternativeName>
        <fullName>Cytochrome b-c1 complex subunit 1, mitochondrial</fullName>
    </alternativeName>
    <alternativeName>
        <fullName evidence="14">Processing enhancing protein</fullName>
    </alternativeName>
    <alternativeName>
        <fullName>Ubiquinol-cytochrome c oxidoreductase core protein 1</fullName>
    </alternativeName>
    <alternativeName>
        <fullName>Ubiquinol-cytochrome c reductase complex 50 kDa protein</fullName>
    </alternativeName>
</protein>
<accession>P11913</accession>
<accession>Q7RVM7</accession>
<name>MPPB_NEUCR</name>
<sequence length="476" mass="52556">MASRRLALNLAQGVKARAGGVINPFRRGLATPHSGTGIKTQTTTLKNGLTVASQYSPYAQTSTVGMWIDAGSRAETDETNGTAHFLEHLAFKGTTKRTQQQLELEIENMGAHLNAYTSRENTVYFAKALNEDVPKCVDILQDILQNSKLEESAIERERDVILRESEEVEKQLEEVVFDHLHATAYQHQPLGRTILGPRENIRDITRTELVNYIKNNYTADRMVLVGAGGVPHEQLVEMADKYFSKLPATAPVSSASILSKKKPDFIGSDIRIRDDTIPTANIAIAVEGVSWSDDDYFTGLVTQAIVGNYDKALGNAPHQGSKLSGFVHKHDLATSFMSFSTSYSDTGLWGIYLVTDKLDRVDDLVHFSLREWTRLCSNVSEAEVERAKAQLKASILLSLDGTTAVAEDIGRQIVTTGRRMSPAEIERIIDAVSAKDVMDFANKKIWDQDIAISAVGSIEGLFDYARIRGDMSRNAF</sequence>
<reference key="1">
    <citation type="journal article" date="1988" name="Cell">
        <title>Mitochondrial protein import: identification of processing peptidase and of PEP, a processing enhancing protein.</title>
        <authorList>
            <person name="Hawlitschek G."/>
            <person name="Schneider H."/>
            <person name="Schmidt B."/>
            <person name="Tropschug M."/>
            <person name="Hartl F.-U."/>
            <person name="Neupert W."/>
        </authorList>
    </citation>
    <scope>NUCLEOTIDE SEQUENCE [MRNA]</scope>
    <scope>PROTEIN SEQUENCE OF 29-34</scope>
    <scope>FUNCTION IN MPP</scope>
    <scope>CATALYTIC ACTIVITY</scope>
    <scope>COFACTOR</scope>
    <scope>INTERACTION WITH MPP</scope>
    <scope>SUBCELLULAR LOCATION</scope>
    <source>
        <strain>ATCC 24698 / 74-OR23-1A / CBS 708.71 / DSM 1257 / FGSC 987</strain>
    </source>
</reference>
<reference key="2">
    <citation type="journal article" date="2003" name="Nature">
        <title>The genome sequence of the filamentous fungus Neurospora crassa.</title>
        <authorList>
            <person name="Galagan J.E."/>
            <person name="Calvo S.E."/>
            <person name="Borkovich K.A."/>
            <person name="Selker E.U."/>
            <person name="Read N.D."/>
            <person name="Jaffe D.B."/>
            <person name="FitzHugh W."/>
            <person name="Ma L.-J."/>
            <person name="Smirnov S."/>
            <person name="Purcell S."/>
            <person name="Rehman B."/>
            <person name="Elkins T."/>
            <person name="Engels R."/>
            <person name="Wang S."/>
            <person name="Nielsen C.B."/>
            <person name="Butler J."/>
            <person name="Endrizzi M."/>
            <person name="Qui D."/>
            <person name="Ianakiev P."/>
            <person name="Bell-Pedersen D."/>
            <person name="Nelson M.A."/>
            <person name="Werner-Washburne M."/>
            <person name="Selitrennikoff C.P."/>
            <person name="Kinsey J.A."/>
            <person name="Braun E.L."/>
            <person name="Zelter A."/>
            <person name="Schulte U."/>
            <person name="Kothe G.O."/>
            <person name="Jedd G."/>
            <person name="Mewes H.-W."/>
            <person name="Staben C."/>
            <person name="Marcotte E."/>
            <person name="Greenberg D."/>
            <person name="Roy A."/>
            <person name="Foley K."/>
            <person name="Naylor J."/>
            <person name="Stange-Thomann N."/>
            <person name="Barrett R."/>
            <person name="Gnerre S."/>
            <person name="Kamal M."/>
            <person name="Kamvysselis M."/>
            <person name="Mauceli E.W."/>
            <person name="Bielke C."/>
            <person name="Rudd S."/>
            <person name="Frishman D."/>
            <person name="Krystofova S."/>
            <person name="Rasmussen C."/>
            <person name="Metzenberg R.L."/>
            <person name="Perkins D.D."/>
            <person name="Kroken S."/>
            <person name="Cogoni C."/>
            <person name="Macino G."/>
            <person name="Catcheside D.E.A."/>
            <person name="Li W."/>
            <person name="Pratt R.J."/>
            <person name="Osmani S.A."/>
            <person name="DeSouza C.P.C."/>
            <person name="Glass N.L."/>
            <person name="Orbach M.J."/>
            <person name="Berglund J.A."/>
            <person name="Voelker R."/>
            <person name="Yarden O."/>
            <person name="Plamann M."/>
            <person name="Seiler S."/>
            <person name="Dunlap J.C."/>
            <person name="Radford A."/>
            <person name="Aramayo R."/>
            <person name="Natvig D.O."/>
            <person name="Alex L.A."/>
            <person name="Mannhaupt G."/>
            <person name="Ebbole D.J."/>
            <person name="Freitag M."/>
            <person name="Paulsen I."/>
            <person name="Sachs M.S."/>
            <person name="Lander E.S."/>
            <person name="Nusbaum C."/>
            <person name="Birren B.W."/>
        </authorList>
    </citation>
    <scope>NUCLEOTIDE SEQUENCE [LARGE SCALE GENOMIC DNA]</scope>
    <source>
        <strain>ATCC 24698 / 74-OR23-1A / CBS 708.71 / DSM 1257 / FGSC 987</strain>
    </source>
</reference>
<reference key="3">
    <citation type="journal article" date="1979" name="Eur. J. Biochem.">
        <title>Isolation of mitochondrial succinate: ubiquinone reductase, cytochrome c reductase and cytochrome c oxidase from Neurospora crassa using nonionic detergent.</title>
        <authorList>
            <person name="Weiss H."/>
            <person name="Kolb H.J."/>
        </authorList>
    </citation>
    <scope>SUBUNIT</scope>
    <scope>SUBCELLULAR LOCATION</scope>
</reference>
<reference key="4">
    <citation type="journal article" date="1981" name="J. Mol. Biol.">
        <title>Three-dimensional structure of ubiquinol:cytochrome c reductase from Neurospora mitochondria determined by electron microscopy of membrane crystals.</title>
        <authorList>
            <person name="Leonard K."/>
            <person name="Wingfield P."/>
            <person name="Arad T."/>
            <person name="Weiss H."/>
        </authorList>
    </citation>
    <scope>SUBUNIT</scope>
</reference>
<reference key="5">
    <citation type="journal article" date="1983" name="J. Bioenerg. Biomembr.">
        <title>Comparative study of the peptide composition of Complex III (quinol-cytochrome c reductase).</title>
        <authorList>
            <person name="Mendel-Hartvig I."/>
            <person name="Nelson B.D."/>
        </authorList>
    </citation>
    <scope>SUBUNIT</scope>
</reference>
<reference key="6">
    <citation type="journal article" date="1983" name="J. Mol. Biol.">
        <title>Structural studies of cytochrome reductase. Subunit topography determined by electron microscopy of membrane crystals of a subcomplex.</title>
        <authorList>
            <person name="Karlsson B."/>
            <person name="Hovmoeller S."/>
            <person name="Weiss H."/>
            <person name="Leonard K."/>
        </authorList>
    </citation>
    <scope>SUBUNIT</scope>
</reference>
<reference key="7">
    <citation type="journal article" date="1986" name="Eur. J. Biochem.">
        <title>Dimeric ubiquinol:cytochrome c reductase of Neurospora mitochondria contains one cooperative ubiquinone-reduction centre.</title>
        <authorList>
            <person name="Linke P."/>
            <person name="Bechmann G."/>
            <person name="Gothe A."/>
            <person name="Weiss H."/>
        </authorList>
    </citation>
    <scope>FUNCTION OF COMPLEX III</scope>
</reference>
<reference key="8">
    <citation type="journal article" date="1989" name="Nature">
        <title>A family of mitochondrial proteins involved in bioenergetics and biogenesis.</title>
        <authorList>
            <person name="Schulte U."/>
            <person name="Arretz M."/>
            <person name="Schneider H."/>
            <person name="Tropschug M."/>
            <person name="Wachter E."/>
            <person name="Neupert W."/>
            <person name="Weiss H."/>
        </authorList>
    </citation>
    <scope>IDENTITY WITH CYTOCHROME C REDUCTASE CORE PROTEIN I</scope>
</reference>
<reference key="9">
    <citation type="journal article" date="1991" name="Eur. J. Biochem.">
        <title>Regulation of the proton/electron stoichiometry of mitochondrial ubiquinol:cytochrome c reductase by the membrane potential.</title>
        <authorList>
            <person name="Bechmann G."/>
            <person name="Weiss H."/>
        </authorList>
    </citation>
    <scope>FUNCTION OF COMPLEX III</scope>
</reference>
<reference key="10">
    <citation type="journal article" date="1994" name="J. Biol. Chem.">
        <title>Characterization of the mitochondrial processing peptidase of Neurospora crassa.</title>
        <authorList>
            <person name="Arretz M."/>
            <person name="Schneider H."/>
            <person name="Guiard B."/>
            <person name="Brunner M."/>
            <person name="Neupert W."/>
        </authorList>
    </citation>
    <scope>FUNCTION IN MPP</scope>
    <scope>CATALYTIC ACTIVITY</scope>
</reference>
<reference key="11">
    <citation type="journal article" date="2007" name="Eukaryot. Cell">
        <title>Supramolecular organization of the respiratory chain in Neurospora crassa mitochondria.</title>
        <authorList>
            <person name="Marques I."/>
            <person name="Dencher N.A."/>
            <person name="Videira A."/>
            <person name="Krause F."/>
        </authorList>
    </citation>
    <scope>SUBUNIT</scope>
    <scope>IDENTIFICATION BY MASS SPECTROMETRY</scope>
</reference>
<reference key="12">
    <citation type="journal article" date="2009" name="Mol. Microbiol.">
        <title>Effects of mitochondrial complex III disruption in the respiratory chain of Neurospora crassa.</title>
        <authorList>
            <person name="Duarte M."/>
            <person name="Videira A."/>
        </authorList>
    </citation>
    <scope>FUNCTION OF COMPLEX III</scope>
    <scope>SUBUNIT</scope>
</reference>
<dbReference type="EC" id="3.4.24.64" evidence="9 13"/>
<dbReference type="EMBL" id="M20928">
    <property type="protein sequence ID" value="AAA33606.1"/>
    <property type="molecule type" value="mRNA"/>
</dbReference>
<dbReference type="EMBL" id="CM002236">
    <property type="protein sequence ID" value="EAA36444.1"/>
    <property type="molecule type" value="Genomic_DNA"/>
</dbReference>
<dbReference type="PIR" id="A29881">
    <property type="entry name" value="A29881"/>
</dbReference>
<dbReference type="RefSeq" id="XP_965680.1">
    <property type="nucleotide sequence ID" value="XM_960587.3"/>
</dbReference>
<dbReference type="SMR" id="P11913"/>
<dbReference type="FunCoup" id="P11913">
    <property type="interactions" value="869"/>
</dbReference>
<dbReference type="STRING" id="367110.P11913"/>
<dbReference type="MEROPS" id="M16.003"/>
<dbReference type="PaxDb" id="5141-EFNCRP00000002229"/>
<dbReference type="EnsemblFungi" id="EAA36444">
    <property type="protein sequence ID" value="EAA36444"/>
    <property type="gene ID" value="NCU02549"/>
</dbReference>
<dbReference type="GeneID" id="3881830"/>
<dbReference type="KEGG" id="ncr:NCU02549"/>
<dbReference type="VEuPathDB" id="FungiDB:NCU02549"/>
<dbReference type="HOGENOM" id="CLU_009902_4_2_1"/>
<dbReference type="InParanoid" id="P11913"/>
<dbReference type="OrthoDB" id="10251424at2759"/>
<dbReference type="Proteomes" id="UP000001805">
    <property type="component" value="Chromosome 1, Linkage Group I"/>
</dbReference>
<dbReference type="GO" id="GO:0005743">
    <property type="term" value="C:mitochondrial inner membrane"/>
    <property type="evidence" value="ECO:0007669"/>
    <property type="project" value="UniProtKB-SubCell"/>
</dbReference>
<dbReference type="GO" id="GO:0017087">
    <property type="term" value="C:mitochondrial processing peptidase complex"/>
    <property type="evidence" value="ECO:0007669"/>
    <property type="project" value="EnsemblFungi"/>
</dbReference>
<dbReference type="GO" id="GO:0005739">
    <property type="term" value="C:mitochondrion"/>
    <property type="evidence" value="ECO:0000318"/>
    <property type="project" value="GO_Central"/>
</dbReference>
<dbReference type="GO" id="GO:0046872">
    <property type="term" value="F:metal ion binding"/>
    <property type="evidence" value="ECO:0007669"/>
    <property type="project" value="UniProtKB-KW"/>
</dbReference>
<dbReference type="GO" id="GO:0004222">
    <property type="term" value="F:metalloendopeptidase activity"/>
    <property type="evidence" value="ECO:0000318"/>
    <property type="project" value="GO_Central"/>
</dbReference>
<dbReference type="GO" id="GO:0006627">
    <property type="term" value="P:protein processing involved in protein targeting to mitochondrion"/>
    <property type="evidence" value="ECO:0000318"/>
    <property type="project" value="GO_Central"/>
</dbReference>
<dbReference type="FunFam" id="3.30.830.10:FF:000002">
    <property type="entry name" value="Mitochondrial-processing peptidase subunit beta"/>
    <property type="match status" value="1"/>
</dbReference>
<dbReference type="FunFam" id="3.30.830.10:FF:000001">
    <property type="entry name" value="Mitochondrial-processing peptidase subunit beta, mitochondrial"/>
    <property type="match status" value="1"/>
</dbReference>
<dbReference type="Gene3D" id="3.30.830.10">
    <property type="entry name" value="Metalloenzyme, LuxS/M16 peptidase-like"/>
    <property type="match status" value="2"/>
</dbReference>
<dbReference type="InterPro" id="IPR011249">
    <property type="entry name" value="Metalloenz_LuxS/M16"/>
</dbReference>
<dbReference type="InterPro" id="IPR050361">
    <property type="entry name" value="MPP/UQCRC_Complex"/>
</dbReference>
<dbReference type="InterPro" id="IPR011765">
    <property type="entry name" value="Pept_M16_N"/>
</dbReference>
<dbReference type="InterPro" id="IPR001431">
    <property type="entry name" value="Pept_M16_Zn_BS"/>
</dbReference>
<dbReference type="InterPro" id="IPR007863">
    <property type="entry name" value="Peptidase_M16_C"/>
</dbReference>
<dbReference type="PANTHER" id="PTHR11851:SF149">
    <property type="entry name" value="GH01077P"/>
    <property type="match status" value="1"/>
</dbReference>
<dbReference type="PANTHER" id="PTHR11851">
    <property type="entry name" value="METALLOPROTEASE"/>
    <property type="match status" value="1"/>
</dbReference>
<dbReference type="Pfam" id="PF00675">
    <property type="entry name" value="Peptidase_M16"/>
    <property type="match status" value="1"/>
</dbReference>
<dbReference type="Pfam" id="PF05193">
    <property type="entry name" value="Peptidase_M16_C"/>
    <property type="match status" value="1"/>
</dbReference>
<dbReference type="SUPFAM" id="SSF63411">
    <property type="entry name" value="LuxS/MPP-like metallohydrolase"/>
    <property type="match status" value="2"/>
</dbReference>
<dbReference type="PROSITE" id="PS00143">
    <property type="entry name" value="INSULINASE"/>
    <property type="match status" value="1"/>
</dbReference>
<comment type="function">
    <text evidence="9 13">Catalytic subunit of the essential mitochondrial processing protease (MPP), which cleaves the mitochondrial sequence off newly imported precursors proteins (PubMed:2967109). Preferentially, cleaves after an arginine at position P2 (PubMed:8106471).</text>
</comment>
<comment type="function">
    <text evidence="6 7 10 18">Component of the ubiquinol-cytochrome c oxidoreductase, a multisubunit transmembrane complex that is part of the mitochondrial electron transport chain which drives oxidative phosphorylation. The respiratory chain contains 3 multisubunit complexes succinate dehydrogenase (complex II, CII), ubiquinol-cytochrome c oxidoreductase (cytochrome b-c1 complex, complex III, CIII) and cytochrome c oxidase (complex IV, CIV), that cooperate to transfer electrons derived from NADH and succinate to molecular oxygen, creating an electrochemical gradient over the inner membrane that drives transmembrane transport and the ATP synthase. The cytochrome b-c1 complex catalyzes electron transfer from ubiquinol to cytochrome c, linking this redox reaction to translocation of protons across the mitochondrial inner membrane, with protons being carried across the membrane as hydrogens on the quinol. In the process called Q cycle, 2 protons are consumed from the matrix, 4 protons are released into the intermembrane space and 2 electrons are passed to cytochrome c.</text>
</comment>
<comment type="catalytic activity">
    <reaction evidence="9 13">
        <text>Release of N-terminal transit peptides from precursor proteins imported into the mitochondrion, typically with Arg in position P2.</text>
        <dbReference type="EC" id="3.4.24.64"/>
    </reaction>
</comment>
<comment type="cofactor">
    <cofactor evidence="9">
        <name>Zn(2+)</name>
        <dbReference type="ChEBI" id="CHEBI:29105"/>
    </cofactor>
    <text evidence="2">Binds 1 zinc ion per subunit.</text>
</comment>
<comment type="activity regulation">
    <text evidence="9">Binding to mpp is required for catalytic activity (PubMed:2967109). Inhibited by metal chelator ethylenediaminetetraacetic acid (EDTA) (PubMed:2967109).</text>
</comment>
<comment type="subunit">
    <text evidence="4 5 7 8 9 11 12">Heterodimer of mpp (alpha) and pep (beta) subunits, forming the mitochondrial processing protease (MPP) in which mpp is involved in substrate recognition and binding and pep is the catalytic subunit (PubMed:2967109). Component of the ubiquinol-cytochrome c oxidoreductase (cytochrome b-c1 complex, complex III, CIII), a multisubunit enzyme composed of 10 subunits. The complex is composed of 3 respiratory subunits cytochrome b (cob), cytochrome c1 (cyt-1) and Rieske protein (fes-1), 2 core protein subunits pep and ucr-1, and 5 low-molecular weight protein subunits qcr6, qcr7, qcr8, qcr9 and probably NCU16844/qcr10 (PubMed:18251112, PubMed:226365, PubMed:6273583, PubMed:6302289). The complex exists as an obligatory dimer and forms supercomplexes (SCs) in the inner mitochondrial membrane with NADH-ubiquinone oxidoreductase (complex I, CI) and cytochrome c oxidase (complex IV, CIV), resulting in different assemblies (supercomplexes SCI(1)III(2), SCIII(2)IV(1) and SCIII(2)IV(2) as well as higher order I(x)III(y)IV(z) megacomplexes) (PubMed:17873079, PubMed:19239619).</text>
</comment>
<comment type="subcellular location">
    <subcellularLocation>
        <location evidence="9">Mitochondrion matrix</location>
    </subcellularLocation>
    <subcellularLocation>
        <location evidence="8">Mitochondrion inner membrane</location>
        <topology evidence="1">Peripheral membrane protein</topology>
        <orientation evidence="1">Matrix side</orientation>
    </subcellularLocation>
</comment>
<comment type="similarity">
    <text evidence="17">Belongs to the peptidase M16 family.</text>
</comment>
<keyword id="KW-0903">Direct protein sequencing</keyword>
<keyword id="KW-0249">Electron transport</keyword>
<keyword id="KW-0378">Hydrolase</keyword>
<keyword id="KW-0472">Membrane</keyword>
<keyword id="KW-0479">Metal-binding</keyword>
<keyword id="KW-0482">Metalloprotease</keyword>
<keyword id="KW-0496">Mitochondrion</keyword>
<keyword id="KW-0999">Mitochondrion inner membrane</keyword>
<keyword id="KW-0645">Protease</keyword>
<keyword id="KW-1185">Reference proteome</keyword>
<keyword id="KW-0679">Respiratory chain</keyword>
<keyword id="KW-0809">Transit peptide</keyword>
<keyword id="KW-0813">Transport</keyword>
<keyword id="KW-0862">Zinc</keyword>